<sequence length="71" mass="8418">MGGRRRKKRTNDVKHVRFAAAVEVWEADDIERKGPWEQAAVDRFRFQRRIASVEELLSAVLLRQKKLLEQQ</sequence>
<accession>P0C753</accession>
<keyword id="KW-0945">Host-virus interaction</keyword>
<keyword id="KW-1090">Inhibition of host innate immune response by virus</keyword>
<keyword id="KW-1114">Inhibition of host interferon signaling pathway by virus</keyword>
<keyword id="KW-0922">Interferon antiviral system evasion</keyword>
<keyword id="KW-0426">Late protein</keyword>
<keyword id="KW-1126">Modulation of host PP1 activity by virus</keyword>
<keyword id="KW-0899">Viral immunoevasion</keyword>
<reference key="1">
    <citation type="submission" date="2003-03" db="EMBL/GenBank/DDBJ databases">
        <title>African swine fever virus genomes.</title>
        <authorList>
            <person name="Kutish G.F."/>
            <person name="Rock D.L."/>
        </authorList>
    </citation>
    <scope>NUCLEOTIDE SEQUENCE [LARGE SCALE GENOMIC DNA]</scope>
</reference>
<name>DP71L_ASFWA</name>
<organism>
    <name type="scientific">African swine fever virus (isolate Warthog/Namibia/Wart80/1980)</name>
    <name type="common">ASFV</name>
    <dbReference type="NCBI Taxonomy" id="561444"/>
    <lineage>
        <taxon>Viruses</taxon>
        <taxon>Varidnaviria</taxon>
        <taxon>Bamfordvirae</taxon>
        <taxon>Nucleocytoviricota</taxon>
        <taxon>Pokkesviricetes</taxon>
        <taxon>Asfuvirales</taxon>
        <taxon>Asfarviridae</taxon>
        <taxon>Asfivirus</taxon>
        <taxon>African swine fever virus</taxon>
    </lineage>
</organism>
<protein>
    <recommendedName>
        <fullName>Protein DP71L</fullName>
    </recommendedName>
    <alternativeName>
        <fullName>MyD116 homolog</fullName>
    </alternativeName>
</protein>
<dbReference type="EMBL" id="AY261366">
    <property type="status" value="NOT_ANNOTATED_CDS"/>
    <property type="molecule type" value="Genomic_DNA"/>
</dbReference>
<dbReference type="SMR" id="P0C753"/>
<dbReference type="Proteomes" id="UP000000858">
    <property type="component" value="Segment"/>
</dbReference>
<dbReference type="GO" id="GO:0004865">
    <property type="term" value="F:protein serine/threonine phosphatase inhibitor activity"/>
    <property type="evidence" value="ECO:0007669"/>
    <property type="project" value="UniProtKB-KW"/>
</dbReference>
<dbReference type="GO" id="GO:0060255">
    <property type="term" value="P:regulation of macromolecule metabolic process"/>
    <property type="evidence" value="ECO:0007669"/>
    <property type="project" value="UniProtKB-ARBA"/>
</dbReference>
<dbReference type="GO" id="GO:0080090">
    <property type="term" value="P:regulation of primary metabolic process"/>
    <property type="evidence" value="ECO:0007669"/>
    <property type="project" value="UniProtKB-ARBA"/>
</dbReference>
<dbReference type="GO" id="GO:0034976">
    <property type="term" value="P:response to endoplasmic reticulum stress"/>
    <property type="evidence" value="ECO:0007669"/>
    <property type="project" value="TreeGrafter"/>
</dbReference>
<dbReference type="GO" id="GO:0052170">
    <property type="term" value="P:symbiont-mediated suppression of host innate immune response"/>
    <property type="evidence" value="ECO:0007669"/>
    <property type="project" value="UniProtKB-KW"/>
</dbReference>
<dbReference type="GO" id="GO:0039606">
    <property type="term" value="P:symbiont-mediated suppression of host translation initiation"/>
    <property type="evidence" value="ECO:0007669"/>
    <property type="project" value="UniProtKB-KW"/>
</dbReference>
<dbReference type="GO" id="GO:0039502">
    <property type="term" value="P:symbiont-mediated suppression of host type I interferon-mediated signaling pathway"/>
    <property type="evidence" value="ECO:0007669"/>
    <property type="project" value="UniProtKB-KW"/>
</dbReference>
<dbReference type="InterPro" id="IPR051254">
    <property type="entry name" value="PPP1R15"/>
</dbReference>
<dbReference type="InterPro" id="IPR019523">
    <property type="entry name" value="Prot_Pase1_reg-su15A/B_C"/>
</dbReference>
<dbReference type="PANTHER" id="PTHR16489">
    <property type="entry name" value="GH11727P"/>
    <property type="match status" value="1"/>
</dbReference>
<dbReference type="PANTHER" id="PTHR16489:SF12">
    <property type="entry name" value="GH11727P"/>
    <property type="match status" value="1"/>
</dbReference>
<dbReference type="Pfam" id="PF10488">
    <property type="entry name" value="PP1c_bdg"/>
    <property type="match status" value="1"/>
</dbReference>
<proteinExistence type="inferred from homology"/>
<feature type="chain" id="PRO_0000379087" description="Protein DP71L">
    <location>
        <begin position="1"/>
        <end position="71"/>
    </location>
</feature>
<feature type="region of interest" description="Important for host CHOP inhibition" evidence="1">
    <location>
        <begin position="16"/>
        <end position="18"/>
    </location>
</feature>
<feature type="region of interest" description="Important for host CHOP inhibition" evidence="1">
    <location>
        <begin position="57"/>
        <end position="61"/>
    </location>
</feature>
<comment type="function">
    <text evidence="1">Interacts with the host phosphatase PP1 catalytic subunit (PPP1CB) and recruits it to dephosphorylate EIF2S1/eIF2alpha and therefore restores the host translation that has been shut-down by the host. Also inhibits the EIF2S1/eIF2alpha-ATF4-DDIT3/CHOP pathway.</text>
</comment>
<comment type="subunit">
    <text evidence="1">Interacts (via C-terminus) with host PPP1CB.</text>
</comment>
<comment type="induction">
    <text evidence="2">Expressed in the late phase of the viral replicative cycle.</text>
</comment>
<comment type="similarity">
    <text evidence="2">Belongs to the asfivirus DP71L family.</text>
</comment>
<organismHost>
    <name type="scientific">Ornithodoros</name>
    <name type="common">relapsing fever ticks</name>
    <dbReference type="NCBI Taxonomy" id="6937"/>
</organismHost>
<organismHost>
    <name type="scientific">Phacochoerus aethiopicus</name>
    <name type="common">Warthog</name>
    <dbReference type="NCBI Taxonomy" id="85517"/>
</organismHost>
<organismHost>
    <name type="scientific">Phacochoerus africanus</name>
    <name type="common">Warthog</name>
    <dbReference type="NCBI Taxonomy" id="41426"/>
</organismHost>
<organismHost>
    <name type="scientific">Potamochoerus larvatus</name>
    <name type="common">Bushpig</name>
    <dbReference type="NCBI Taxonomy" id="273792"/>
</organismHost>
<organismHost>
    <name type="scientific">Sus scrofa</name>
    <name type="common">Pig</name>
    <dbReference type="NCBI Taxonomy" id="9823"/>
</organismHost>
<evidence type="ECO:0000250" key="1">
    <source>
        <dbReference type="UniProtKB" id="Q65212"/>
    </source>
</evidence>
<evidence type="ECO:0000305" key="2"/>
<gene>
    <name type="ordered locus">War-170</name>
</gene>